<protein>
    <recommendedName>
        <fullName evidence="3">Periviscerokinin-2</fullName>
        <shortName evidence="3">MasDa-PVK-2</shortName>
    </recommendedName>
</protein>
<feature type="peptide" id="PRO_0000378799" description="Periviscerokinin-2" evidence="2">
    <location>
        <begin position="1"/>
        <end position="11"/>
    </location>
</feature>
<feature type="modified residue" description="Valine amide" evidence="2">
    <location>
        <position position="11"/>
    </location>
</feature>
<reference evidence="4" key="1">
    <citation type="journal article" date="2009" name="BMC Evol. Biol.">
        <title>A proteomic approach for studying insect phylogeny: CAPA peptides of ancient insect taxa (Dictyoptera, Blattoptera) as a test case.</title>
        <authorList>
            <person name="Roth S."/>
            <person name="Fromm B."/>
            <person name="Gaede G."/>
            <person name="Predel R."/>
        </authorList>
    </citation>
    <scope>PROTEIN SEQUENCE</scope>
    <scope>AMIDATION AT VAL-11</scope>
    <source>
        <tissue evidence="2">Abdominal perisympathetic organs</tissue>
    </source>
</reference>
<keyword id="KW-0027">Amidation</keyword>
<keyword id="KW-0903">Direct protein sequencing</keyword>
<keyword id="KW-0527">Neuropeptide</keyword>
<keyword id="KW-0964">Secreted</keyword>
<evidence type="ECO:0000255" key="1"/>
<evidence type="ECO:0000269" key="2">
    <source>
    </source>
</evidence>
<evidence type="ECO:0000303" key="3">
    <source>
    </source>
</evidence>
<evidence type="ECO:0000305" key="4"/>
<comment type="function">
    <text evidence="4">Mediates visceral muscle contractile activity (myotropic activity).</text>
</comment>
<comment type="subcellular location">
    <subcellularLocation>
        <location evidence="4">Secreted</location>
    </subcellularLocation>
</comment>
<comment type="similarity">
    <text evidence="1">Belongs to the periviscerokinin family.</text>
</comment>
<name>PVK2_MASDA</name>
<dbReference type="GO" id="GO:0005576">
    <property type="term" value="C:extracellular region"/>
    <property type="evidence" value="ECO:0007669"/>
    <property type="project" value="UniProtKB-SubCell"/>
</dbReference>
<dbReference type="GO" id="GO:0007218">
    <property type="term" value="P:neuropeptide signaling pathway"/>
    <property type="evidence" value="ECO:0007669"/>
    <property type="project" value="UniProtKB-KW"/>
</dbReference>
<dbReference type="InterPro" id="IPR013231">
    <property type="entry name" value="Periviscerokinin"/>
</dbReference>
<dbReference type="Pfam" id="PF08259">
    <property type="entry name" value="Periviscerokin"/>
    <property type="match status" value="1"/>
</dbReference>
<proteinExistence type="evidence at protein level"/>
<organism>
    <name type="scientific">Mastotermes darwiniensis</name>
    <name type="common">Giant northern termite</name>
    <dbReference type="NCBI Taxonomy" id="13139"/>
    <lineage>
        <taxon>Eukaryota</taxon>
        <taxon>Metazoa</taxon>
        <taxon>Ecdysozoa</taxon>
        <taxon>Arthropoda</taxon>
        <taxon>Hexapoda</taxon>
        <taxon>Insecta</taxon>
        <taxon>Pterygota</taxon>
        <taxon>Neoptera</taxon>
        <taxon>Polyneoptera</taxon>
        <taxon>Dictyoptera</taxon>
        <taxon>Blattodea</taxon>
        <taxon>Blattoidea</taxon>
        <taxon>Termitoidae</taxon>
        <taxon>Mastotermitidae</taxon>
        <taxon>Mastotermes</taxon>
    </lineage>
</organism>
<sequence length="11" mass="1113">GSSGLIPMPRV</sequence>
<accession>P85679</accession>